<comment type="function">
    <text evidence="1">Could be a mediator in iron transactions between iron acquisition and iron-requiring processes, such as synthesis and/or repair of Fe-S clusters in biosynthetic enzymes.</text>
</comment>
<comment type="subunit">
    <text evidence="1">Monomer.</text>
</comment>
<comment type="similarity">
    <text evidence="1">Belongs to the Fe(2+)-trafficking protein family.</text>
</comment>
<feature type="chain" id="PRO_1000045030" description="Probable Fe(2+)-trafficking protein">
    <location>
        <begin position="1"/>
        <end position="91"/>
    </location>
</feature>
<protein>
    <recommendedName>
        <fullName evidence="1">Probable Fe(2+)-trafficking protein</fullName>
    </recommendedName>
</protein>
<name>FETP_CITK8</name>
<evidence type="ECO:0000255" key="1">
    <source>
        <dbReference type="HAMAP-Rule" id="MF_00686"/>
    </source>
</evidence>
<sequence>MSRTIFCTFLQREAEGQDFQLYPGELGKRIYNEISKEAWAQWQHKQTMLINEKKLNMMNVEHRKLLEQEMINFLFEGKDVHIEGYTPEEKK</sequence>
<accession>A8API1</accession>
<reference key="1">
    <citation type="submission" date="2007-08" db="EMBL/GenBank/DDBJ databases">
        <authorList>
            <consortium name="The Citrobacter koseri Genome Sequencing Project"/>
            <person name="McClelland M."/>
            <person name="Sanderson E.K."/>
            <person name="Porwollik S."/>
            <person name="Spieth J."/>
            <person name="Clifton W.S."/>
            <person name="Latreille P."/>
            <person name="Courtney L."/>
            <person name="Wang C."/>
            <person name="Pepin K."/>
            <person name="Bhonagiri V."/>
            <person name="Nash W."/>
            <person name="Johnson M."/>
            <person name="Thiruvilangam P."/>
            <person name="Wilson R."/>
        </authorList>
    </citation>
    <scope>NUCLEOTIDE SEQUENCE [LARGE SCALE GENOMIC DNA]</scope>
    <source>
        <strain>ATCC BAA-895 / CDC 4225-83 / SGSC4696</strain>
    </source>
</reference>
<organism>
    <name type="scientific">Citrobacter koseri (strain ATCC BAA-895 / CDC 4225-83 / SGSC4696)</name>
    <dbReference type="NCBI Taxonomy" id="290338"/>
    <lineage>
        <taxon>Bacteria</taxon>
        <taxon>Pseudomonadati</taxon>
        <taxon>Pseudomonadota</taxon>
        <taxon>Gammaproteobacteria</taxon>
        <taxon>Enterobacterales</taxon>
        <taxon>Enterobacteriaceae</taxon>
        <taxon>Citrobacter</taxon>
    </lineage>
</organism>
<gene>
    <name type="ordered locus">CKO_04337</name>
</gene>
<keyword id="KW-0408">Iron</keyword>
<keyword id="KW-1185">Reference proteome</keyword>
<dbReference type="EMBL" id="CP000822">
    <property type="protein sequence ID" value="ABV15394.1"/>
    <property type="molecule type" value="Genomic_DNA"/>
</dbReference>
<dbReference type="RefSeq" id="WP_012135077.1">
    <property type="nucleotide sequence ID" value="NC_009792.1"/>
</dbReference>
<dbReference type="SMR" id="A8API1"/>
<dbReference type="STRING" id="290338.CKO_04337"/>
<dbReference type="GeneID" id="45137927"/>
<dbReference type="KEGG" id="cko:CKO_04337"/>
<dbReference type="HOGENOM" id="CLU_170994_0_0_6"/>
<dbReference type="OrthoDB" id="9804318at2"/>
<dbReference type="Proteomes" id="UP000008148">
    <property type="component" value="Chromosome"/>
</dbReference>
<dbReference type="GO" id="GO:0005829">
    <property type="term" value="C:cytosol"/>
    <property type="evidence" value="ECO:0007669"/>
    <property type="project" value="TreeGrafter"/>
</dbReference>
<dbReference type="GO" id="GO:0005506">
    <property type="term" value="F:iron ion binding"/>
    <property type="evidence" value="ECO:0007669"/>
    <property type="project" value="UniProtKB-UniRule"/>
</dbReference>
<dbReference type="GO" id="GO:0034599">
    <property type="term" value="P:cellular response to oxidative stress"/>
    <property type="evidence" value="ECO:0007669"/>
    <property type="project" value="TreeGrafter"/>
</dbReference>
<dbReference type="FunFam" id="1.10.3880.10:FF:000001">
    <property type="entry name" value="Probable Fe(2+)-trafficking protein"/>
    <property type="match status" value="1"/>
</dbReference>
<dbReference type="Gene3D" id="1.10.3880.10">
    <property type="entry name" value="Fe(II) trafficking protein YggX"/>
    <property type="match status" value="1"/>
</dbReference>
<dbReference type="HAMAP" id="MF_00686">
    <property type="entry name" value="Fe_traffic_YggX"/>
    <property type="match status" value="1"/>
</dbReference>
<dbReference type="InterPro" id="IPR007457">
    <property type="entry name" value="Fe_traffick_prot_YggX"/>
</dbReference>
<dbReference type="InterPro" id="IPR036766">
    <property type="entry name" value="Fe_traffick_prot_YggX_sf"/>
</dbReference>
<dbReference type="NCBIfam" id="NF003817">
    <property type="entry name" value="PRK05408.1"/>
    <property type="match status" value="1"/>
</dbReference>
<dbReference type="PANTHER" id="PTHR36965">
    <property type="entry name" value="FE(2+)-TRAFFICKING PROTEIN-RELATED"/>
    <property type="match status" value="1"/>
</dbReference>
<dbReference type="PANTHER" id="PTHR36965:SF1">
    <property type="entry name" value="FE(2+)-TRAFFICKING PROTEIN-RELATED"/>
    <property type="match status" value="1"/>
</dbReference>
<dbReference type="Pfam" id="PF04362">
    <property type="entry name" value="Iron_traffic"/>
    <property type="match status" value="1"/>
</dbReference>
<dbReference type="PIRSF" id="PIRSF029827">
    <property type="entry name" value="Fe_traffic_YggX"/>
    <property type="match status" value="1"/>
</dbReference>
<dbReference type="SUPFAM" id="SSF111148">
    <property type="entry name" value="YggX-like"/>
    <property type="match status" value="1"/>
</dbReference>
<proteinExistence type="inferred from homology"/>